<evidence type="ECO:0000255" key="1">
    <source>
        <dbReference type="HAMAP-Rule" id="MF_01341"/>
    </source>
</evidence>
<evidence type="ECO:0000256" key="2">
    <source>
        <dbReference type="SAM" id="MobiDB-lite"/>
    </source>
</evidence>
<evidence type="ECO:0000305" key="3"/>
<reference key="1">
    <citation type="submission" date="2007-11" db="EMBL/GenBank/DDBJ databases">
        <title>Complete sequence of chromosome of Shewanella baltica OS195.</title>
        <authorList>
            <consortium name="US DOE Joint Genome Institute"/>
            <person name="Copeland A."/>
            <person name="Lucas S."/>
            <person name="Lapidus A."/>
            <person name="Barry K."/>
            <person name="Glavina del Rio T."/>
            <person name="Dalin E."/>
            <person name="Tice H."/>
            <person name="Pitluck S."/>
            <person name="Chain P."/>
            <person name="Malfatti S."/>
            <person name="Shin M."/>
            <person name="Vergez L."/>
            <person name="Schmutz J."/>
            <person name="Larimer F."/>
            <person name="Land M."/>
            <person name="Hauser L."/>
            <person name="Kyrpides N."/>
            <person name="Kim E."/>
            <person name="Brettar I."/>
            <person name="Rodrigues J."/>
            <person name="Konstantinidis K."/>
            <person name="Klappenbach J."/>
            <person name="Hofle M."/>
            <person name="Tiedje J."/>
            <person name="Richardson P."/>
        </authorList>
    </citation>
    <scope>NUCLEOTIDE SEQUENCE [LARGE SCALE GENOMIC DNA]</scope>
    <source>
        <strain>OS195</strain>
    </source>
</reference>
<keyword id="KW-0687">Ribonucleoprotein</keyword>
<keyword id="KW-0689">Ribosomal protein</keyword>
<keyword id="KW-0694">RNA-binding</keyword>
<keyword id="KW-0699">rRNA-binding</keyword>
<feature type="chain" id="PRO_1000086730" description="Large ribosomal subunit protein uL15">
    <location>
        <begin position="1"/>
        <end position="144"/>
    </location>
</feature>
<feature type="region of interest" description="Disordered" evidence="2">
    <location>
        <begin position="1"/>
        <end position="54"/>
    </location>
</feature>
<feature type="compositionally biased region" description="Gly residues" evidence="2">
    <location>
        <begin position="21"/>
        <end position="31"/>
    </location>
</feature>
<feature type="compositionally biased region" description="Gly residues" evidence="2">
    <location>
        <begin position="42"/>
        <end position="52"/>
    </location>
</feature>
<accession>A9KWC1</accession>
<name>RL15_SHEB9</name>
<dbReference type="EMBL" id="CP000891">
    <property type="protein sequence ID" value="ABX47401.1"/>
    <property type="molecule type" value="Genomic_DNA"/>
</dbReference>
<dbReference type="RefSeq" id="WP_006083581.1">
    <property type="nucleotide sequence ID" value="NC_009997.1"/>
</dbReference>
<dbReference type="SMR" id="A9KWC1"/>
<dbReference type="GeneID" id="67441779"/>
<dbReference type="KEGG" id="sbn:Sbal195_0219"/>
<dbReference type="HOGENOM" id="CLU_055188_4_2_6"/>
<dbReference type="Proteomes" id="UP000000770">
    <property type="component" value="Chromosome"/>
</dbReference>
<dbReference type="GO" id="GO:0022625">
    <property type="term" value="C:cytosolic large ribosomal subunit"/>
    <property type="evidence" value="ECO:0007669"/>
    <property type="project" value="TreeGrafter"/>
</dbReference>
<dbReference type="GO" id="GO:0019843">
    <property type="term" value="F:rRNA binding"/>
    <property type="evidence" value="ECO:0007669"/>
    <property type="project" value="UniProtKB-UniRule"/>
</dbReference>
<dbReference type="GO" id="GO:0003735">
    <property type="term" value="F:structural constituent of ribosome"/>
    <property type="evidence" value="ECO:0007669"/>
    <property type="project" value="InterPro"/>
</dbReference>
<dbReference type="GO" id="GO:0006412">
    <property type="term" value="P:translation"/>
    <property type="evidence" value="ECO:0007669"/>
    <property type="project" value="UniProtKB-UniRule"/>
</dbReference>
<dbReference type="FunFam" id="3.100.10.10:FF:000003">
    <property type="entry name" value="50S ribosomal protein L15"/>
    <property type="match status" value="1"/>
</dbReference>
<dbReference type="Gene3D" id="3.100.10.10">
    <property type="match status" value="1"/>
</dbReference>
<dbReference type="HAMAP" id="MF_01341">
    <property type="entry name" value="Ribosomal_uL15"/>
    <property type="match status" value="1"/>
</dbReference>
<dbReference type="InterPro" id="IPR030878">
    <property type="entry name" value="Ribosomal_uL15"/>
</dbReference>
<dbReference type="InterPro" id="IPR021131">
    <property type="entry name" value="Ribosomal_uL15/eL18"/>
</dbReference>
<dbReference type="InterPro" id="IPR036227">
    <property type="entry name" value="Ribosomal_uL15/eL18_sf"/>
</dbReference>
<dbReference type="InterPro" id="IPR005749">
    <property type="entry name" value="Ribosomal_uL15_bac-type"/>
</dbReference>
<dbReference type="InterPro" id="IPR001196">
    <property type="entry name" value="Ribosomal_uL15_CS"/>
</dbReference>
<dbReference type="NCBIfam" id="TIGR01071">
    <property type="entry name" value="rplO_bact"/>
    <property type="match status" value="1"/>
</dbReference>
<dbReference type="PANTHER" id="PTHR12934">
    <property type="entry name" value="50S RIBOSOMAL PROTEIN L15"/>
    <property type="match status" value="1"/>
</dbReference>
<dbReference type="PANTHER" id="PTHR12934:SF11">
    <property type="entry name" value="LARGE RIBOSOMAL SUBUNIT PROTEIN UL15M"/>
    <property type="match status" value="1"/>
</dbReference>
<dbReference type="Pfam" id="PF00828">
    <property type="entry name" value="Ribosomal_L27A"/>
    <property type="match status" value="1"/>
</dbReference>
<dbReference type="SUPFAM" id="SSF52080">
    <property type="entry name" value="Ribosomal proteins L15p and L18e"/>
    <property type="match status" value="1"/>
</dbReference>
<dbReference type="PROSITE" id="PS00475">
    <property type="entry name" value="RIBOSOMAL_L15"/>
    <property type="match status" value="1"/>
</dbReference>
<gene>
    <name evidence="1" type="primary">rplO</name>
    <name type="ordered locus">Sbal195_0219</name>
</gene>
<organism>
    <name type="scientific">Shewanella baltica (strain OS195)</name>
    <dbReference type="NCBI Taxonomy" id="399599"/>
    <lineage>
        <taxon>Bacteria</taxon>
        <taxon>Pseudomonadati</taxon>
        <taxon>Pseudomonadota</taxon>
        <taxon>Gammaproteobacteria</taxon>
        <taxon>Alteromonadales</taxon>
        <taxon>Shewanellaceae</taxon>
        <taxon>Shewanella</taxon>
    </lineage>
</organism>
<proteinExistence type="inferred from homology"/>
<comment type="function">
    <text evidence="1">Binds to the 23S rRNA.</text>
</comment>
<comment type="subunit">
    <text evidence="1">Part of the 50S ribosomal subunit.</text>
</comment>
<comment type="similarity">
    <text evidence="1">Belongs to the universal ribosomal protein uL15 family.</text>
</comment>
<sequence length="144" mass="15097">MRLNTLSPAAGSKHAPKRVGRGMGSGLGKTAGRGHKGQKSRSGGGVRPGFEGGQMPLKIRLPKFGFTSRRAMVTAEVRVLELAKVNGDVIDLNALKDANVITRNIQFAKIVLSGTIERPVTVKGLKVTKGARAAIEAAGGKIEE</sequence>
<protein>
    <recommendedName>
        <fullName evidence="1">Large ribosomal subunit protein uL15</fullName>
    </recommendedName>
    <alternativeName>
        <fullName evidence="3">50S ribosomal protein L15</fullName>
    </alternativeName>
</protein>